<keyword id="KW-1015">Disulfide bond</keyword>
<keyword id="KW-0872">Ion channel impairing toxin</keyword>
<keyword id="KW-0960">Knottin</keyword>
<keyword id="KW-0964">Secreted</keyword>
<keyword id="KW-0732">Signal</keyword>
<keyword id="KW-0800">Toxin</keyword>
<comment type="function">
    <text evidence="1">Ion channel inhibitor.</text>
</comment>
<comment type="subcellular location">
    <subcellularLocation>
        <location evidence="1">Secreted</location>
    </subcellularLocation>
</comment>
<comment type="tissue specificity">
    <text>Expressed by the venom gland.</text>
</comment>
<comment type="domain">
    <text evidence="1">The presence of a 'disulfide through disulfide knot' structurally defines this protein as a knottin.</text>
</comment>
<comment type="similarity">
    <text evidence="3">Belongs to the neurotoxin 10 (Hwtx-1) family. 12 (Hntx-12) subfamily.</text>
</comment>
<sequence>MLIKQFSRRSKNMKVQILLAFAALFVLAVGSYASESKKLDLRDALLSAMFSADYQLNPQERGCRYFLGECKKTSECCEHLACHDKHKWCAWDWTIGK</sequence>
<organism>
    <name type="scientific">Cyriopagopus hainanus</name>
    <name type="common">Chinese bird spider</name>
    <name type="synonym">Haplopelma hainanum</name>
    <dbReference type="NCBI Taxonomy" id="209901"/>
    <lineage>
        <taxon>Eukaryota</taxon>
        <taxon>Metazoa</taxon>
        <taxon>Ecdysozoa</taxon>
        <taxon>Arthropoda</taxon>
        <taxon>Chelicerata</taxon>
        <taxon>Arachnida</taxon>
        <taxon>Araneae</taxon>
        <taxon>Mygalomorphae</taxon>
        <taxon>Theraphosidae</taxon>
        <taxon>Haplopelma</taxon>
    </lineage>
</organism>
<protein>
    <recommendedName>
        <fullName>U6-theraphotoxin-Hhn1a 4</fullName>
        <shortName>U6-TRTX-Hhn1a</shortName>
    </recommendedName>
    <alternativeName>
        <fullName evidence="4">Hainantoxin-XII.4</fullName>
        <shortName evidence="4">HNTX-XII.4</shortName>
    </alternativeName>
</protein>
<accession>D2Y2H8</accession>
<feature type="signal peptide" evidence="2">
    <location>
        <begin position="1"/>
        <end position="33"/>
    </location>
</feature>
<feature type="propeptide" id="PRO_0000400677" evidence="1">
    <location>
        <begin position="34"/>
        <end position="61"/>
    </location>
</feature>
<feature type="peptide" id="PRO_0000400678" description="U6-theraphotoxin-Hhn1a 4">
    <location>
        <begin position="62"/>
        <end position="97"/>
    </location>
</feature>
<feature type="disulfide bond" evidence="1">
    <location>
        <begin position="63"/>
        <end position="77"/>
    </location>
</feature>
<feature type="disulfide bond" evidence="1">
    <location>
        <begin position="70"/>
        <end position="82"/>
    </location>
</feature>
<feature type="disulfide bond" evidence="1">
    <location>
        <begin position="76"/>
        <end position="89"/>
    </location>
</feature>
<name>H12A4_CYRHA</name>
<reference key="1">
    <citation type="journal article" date="2010" name="J. Proteome Res.">
        <title>Molecular diversification of peptide toxins from the tarantula Haplopelma hainanum (Ornithoctonus hainana) venom based on transcriptomic, peptidomic, and genomic analyses.</title>
        <authorList>
            <person name="Tang X."/>
            <person name="Zhang Y."/>
            <person name="Hu W."/>
            <person name="Xu D."/>
            <person name="Tao H."/>
            <person name="Yang X."/>
            <person name="Li Y."/>
            <person name="Jiang L."/>
            <person name="Liang S."/>
        </authorList>
    </citation>
    <scope>NUCLEOTIDE SEQUENCE [LARGE SCALE MRNA]</scope>
    <source>
        <tissue>Venom gland</tissue>
    </source>
</reference>
<dbReference type="EMBL" id="GU293055">
    <property type="protein sequence ID" value="ADB56871.1"/>
    <property type="molecule type" value="mRNA"/>
</dbReference>
<dbReference type="SMR" id="D2Y2H8"/>
<dbReference type="ArachnoServer" id="AS001585">
    <property type="toxin name" value="U6-theraphotoxin-Hhn1a"/>
</dbReference>
<dbReference type="GO" id="GO:0005576">
    <property type="term" value="C:extracellular region"/>
    <property type="evidence" value="ECO:0007669"/>
    <property type="project" value="UniProtKB-SubCell"/>
</dbReference>
<dbReference type="GO" id="GO:0008200">
    <property type="term" value="F:ion channel inhibitor activity"/>
    <property type="evidence" value="ECO:0007669"/>
    <property type="project" value="InterPro"/>
</dbReference>
<dbReference type="GO" id="GO:0090729">
    <property type="term" value="F:toxin activity"/>
    <property type="evidence" value="ECO:0007669"/>
    <property type="project" value="UniProtKB-KW"/>
</dbReference>
<dbReference type="InterPro" id="IPR011696">
    <property type="entry name" value="Huwentoxin-1"/>
</dbReference>
<dbReference type="InterPro" id="IPR013140">
    <property type="entry name" value="Huwentoxin_CS1"/>
</dbReference>
<dbReference type="Pfam" id="PF07740">
    <property type="entry name" value="Toxin_12"/>
    <property type="match status" value="1"/>
</dbReference>
<dbReference type="SUPFAM" id="SSF57059">
    <property type="entry name" value="omega toxin-like"/>
    <property type="match status" value="1"/>
</dbReference>
<dbReference type="PROSITE" id="PS60021">
    <property type="entry name" value="HWTX_1"/>
    <property type="match status" value="1"/>
</dbReference>
<proteinExistence type="evidence at transcript level"/>
<evidence type="ECO:0000250" key="1"/>
<evidence type="ECO:0000255" key="2"/>
<evidence type="ECO:0000305" key="3"/>
<evidence type="ECO:0000312" key="4">
    <source>
        <dbReference type="EMBL" id="ADB56871.1"/>
    </source>
</evidence>